<reference key="1">
    <citation type="journal article" date="2006" name="Appl. Environ. Microbiol.">
        <title>Genome sequence of the chemolithoautotrophic nitrite-oxidizing bacterium Nitrobacter winogradskyi Nb-255.</title>
        <authorList>
            <person name="Starkenburg S.R."/>
            <person name="Chain P.S.G."/>
            <person name="Sayavedra-Soto L.A."/>
            <person name="Hauser L."/>
            <person name="Land M.L."/>
            <person name="Larimer F.W."/>
            <person name="Malfatti S.A."/>
            <person name="Klotz M.G."/>
            <person name="Bottomley P.J."/>
            <person name="Arp D.J."/>
            <person name="Hickey W.J."/>
        </authorList>
    </citation>
    <scope>NUCLEOTIDE SEQUENCE [LARGE SCALE GENOMIC DNA]</scope>
    <source>
        <strain>ATCC 25391 / DSM 10237 / CIP 104748 / NCIMB 11846 / Nb-255</strain>
    </source>
</reference>
<name>SELO_NITWN</name>
<sequence>MSQLAEKSCVTPADAAAPIPFDNTYARMPEAFYERVKPAAVAAPRLLRVNDALARQLRIDPAFLKSPQGVAVLSGNEIAPGSDPIAQAYAGHQFGSFVPQLGDGRAILLGEVVDAAGKRFDIQLKGSGRTRFSRRGDGRAAIGPVIREYIVSEAMAALGIPTTRSLAVVLTGEQVMRERVLPGGILTRVASSHLRVGTFQYFAARGDVENLRALADYAIARHYPDVCSAGDPYLAFFDAVVATLARLSARWMLVGFIHGVLNTDNTAIAGETIDYGPCAFIDAYRPDKVFSSIDQFGRYAFENQPAAVAWNLARFAEALLPLIADGGAKAIECANASIAAFDDHFNAAYLSGMRRKLGLVREMEGDLELASDLLTRMSENGADFTLTFRALCGAADDTKGDAEVRGLFADPSAFDQWTERWRQRLSLEGQSAEVRRTDMLSVNPMFIPRNHRIEAAIRDAEAGRFETFHELVEVLSHPFDDQPKFAGYAKPPRPEEEVRQTFCGT</sequence>
<comment type="function">
    <text evidence="1">Nucleotidyltransferase involved in the post-translational modification of proteins. It can catalyze the addition of adenosine monophosphate (AMP) or uridine monophosphate (UMP) to a protein, resulting in modifications known as AMPylation and UMPylation.</text>
</comment>
<comment type="catalytic activity">
    <reaction evidence="1">
        <text>L-seryl-[protein] + ATP = 3-O-(5'-adenylyl)-L-seryl-[protein] + diphosphate</text>
        <dbReference type="Rhea" id="RHEA:58120"/>
        <dbReference type="Rhea" id="RHEA-COMP:9863"/>
        <dbReference type="Rhea" id="RHEA-COMP:15073"/>
        <dbReference type="ChEBI" id="CHEBI:29999"/>
        <dbReference type="ChEBI" id="CHEBI:30616"/>
        <dbReference type="ChEBI" id="CHEBI:33019"/>
        <dbReference type="ChEBI" id="CHEBI:142516"/>
        <dbReference type="EC" id="2.7.7.108"/>
    </reaction>
</comment>
<comment type="catalytic activity">
    <reaction evidence="1">
        <text>L-threonyl-[protein] + ATP = 3-O-(5'-adenylyl)-L-threonyl-[protein] + diphosphate</text>
        <dbReference type="Rhea" id="RHEA:54292"/>
        <dbReference type="Rhea" id="RHEA-COMP:11060"/>
        <dbReference type="Rhea" id="RHEA-COMP:13847"/>
        <dbReference type="ChEBI" id="CHEBI:30013"/>
        <dbReference type="ChEBI" id="CHEBI:30616"/>
        <dbReference type="ChEBI" id="CHEBI:33019"/>
        <dbReference type="ChEBI" id="CHEBI:138113"/>
        <dbReference type="EC" id="2.7.7.108"/>
    </reaction>
</comment>
<comment type="catalytic activity">
    <reaction evidence="1">
        <text>L-tyrosyl-[protein] + ATP = O-(5'-adenylyl)-L-tyrosyl-[protein] + diphosphate</text>
        <dbReference type="Rhea" id="RHEA:54288"/>
        <dbReference type="Rhea" id="RHEA-COMP:10136"/>
        <dbReference type="Rhea" id="RHEA-COMP:13846"/>
        <dbReference type="ChEBI" id="CHEBI:30616"/>
        <dbReference type="ChEBI" id="CHEBI:33019"/>
        <dbReference type="ChEBI" id="CHEBI:46858"/>
        <dbReference type="ChEBI" id="CHEBI:83624"/>
        <dbReference type="EC" id="2.7.7.108"/>
    </reaction>
</comment>
<comment type="catalytic activity">
    <reaction evidence="1">
        <text>L-histidyl-[protein] + UTP = N(tele)-(5'-uridylyl)-L-histidyl-[protein] + diphosphate</text>
        <dbReference type="Rhea" id="RHEA:83891"/>
        <dbReference type="Rhea" id="RHEA-COMP:9745"/>
        <dbReference type="Rhea" id="RHEA-COMP:20239"/>
        <dbReference type="ChEBI" id="CHEBI:29979"/>
        <dbReference type="ChEBI" id="CHEBI:33019"/>
        <dbReference type="ChEBI" id="CHEBI:46398"/>
        <dbReference type="ChEBI" id="CHEBI:233474"/>
    </reaction>
</comment>
<comment type="catalytic activity">
    <reaction evidence="1">
        <text>L-seryl-[protein] + UTP = O-(5'-uridylyl)-L-seryl-[protein] + diphosphate</text>
        <dbReference type="Rhea" id="RHEA:64604"/>
        <dbReference type="Rhea" id="RHEA-COMP:9863"/>
        <dbReference type="Rhea" id="RHEA-COMP:16635"/>
        <dbReference type="ChEBI" id="CHEBI:29999"/>
        <dbReference type="ChEBI" id="CHEBI:33019"/>
        <dbReference type="ChEBI" id="CHEBI:46398"/>
        <dbReference type="ChEBI" id="CHEBI:156051"/>
    </reaction>
</comment>
<comment type="catalytic activity">
    <reaction evidence="1">
        <text>L-tyrosyl-[protein] + UTP = O-(5'-uridylyl)-L-tyrosyl-[protein] + diphosphate</text>
        <dbReference type="Rhea" id="RHEA:83887"/>
        <dbReference type="Rhea" id="RHEA-COMP:10136"/>
        <dbReference type="Rhea" id="RHEA-COMP:20238"/>
        <dbReference type="ChEBI" id="CHEBI:33019"/>
        <dbReference type="ChEBI" id="CHEBI:46398"/>
        <dbReference type="ChEBI" id="CHEBI:46858"/>
        <dbReference type="ChEBI" id="CHEBI:90602"/>
    </reaction>
</comment>
<comment type="cofactor">
    <cofactor evidence="1">
        <name>Mg(2+)</name>
        <dbReference type="ChEBI" id="CHEBI:18420"/>
    </cofactor>
    <cofactor evidence="1">
        <name>Mn(2+)</name>
        <dbReference type="ChEBI" id="CHEBI:29035"/>
    </cofactor>
</comment>
<comment type="similarity">
    <text evidence="1">Belongs to the SELO family.</text>
</comment>
<keyword id="KW-0067">ATP-binding</keyword>
<keyword id="KW-0460">Magnesium</keyword>
<keyword id="KW-0464">Manganese</keyword>
<keyword id="KW-0479">Metal-binding</keyword>
<keyword id="KW-0547">Nucleotide-binding</keyword>
<keyword id="KW-0548">Nucleotidyltransferase</keyword>
<keyword id="KW-1185">Reference proteome</keyword>
<keyword id="KW-0808">Transferase</keyword>
<evidence type="ECO:0000255" key="1">
    <source>
        <dbReference type="HAMAP-Rule" id="MF_00692"/>
    </source>
</evidence>
<organism>
    <name type="scientific">Nitrobacter winogradskyi (strain ATCC 25391 / DSM 10237 / CIP 104748 / NCIMB 11846 / Nb-255)</name>
    <dbReference type="NCBI Taxonomy" id="323098"/>
    <lineage>
        <taxon>Bacteria</taxon>
        <taxon>Pseudomonadati</taxon>
        <taxon>Pseudomonadota</taxon>
        <taxon>Alphaproteobacteria</taxon>
        <taxon>Hyphomicrobiales</taxon>
        <taxon>Nitrobacteraceae</taxon>
        <taxon>Nitrobacter</taxon>
    </lineage>
</organism>
<protein>
    <recommendedName>
        <fullName evidence="1">Protein nucleotidyltransferase YdiU</fullName>
        <ecNumber evidence="1">2.7.7.-</ecNumber>
    </recommendedName>
    <alternativeName>
        <fullName evidence="1">Protein adenylyltransferase YdiU</fullName>
        <ecNumber evidence="1">2.7.7.108</ecNumber>
    </alternativeName>
    <alternativeName>
        <fullName evidence="1">Protein uridylyltransferase YdiU</fullName>
        <ecNumber evidence="1">2.7.7.-</ecNumber>
    </alternativeName>
</protein>
<gene>
    <name evidence="1" type="primary">ydiU</name>
    <name evidence="1" type="synonym">selO</name>
    <name type="ordered locus">Nwi_0945</name>
</gene>
<feature type="chain" id="PRO_0000271837" description="Protein nucleotidyltransferase YdiU">
    <location>
        <begin position="1"/>
        <end position="505"/>
    </location>
</feature>
<feature type="active site" description="Proton acceptor" evidence="1">
    <location>
        <position position="264"/>
    </location>
</feature>
<feature type="binding site" evidence="1">
    <location>
        <position position="102"/>
    </location>
    <ligand>
        <name>ATP</name>
        <dbReference type="ChEBI" id="CHEBI:30616"/>
    </ligand>
</feature>
<feature type="binding site" evidence="1">
    <location>
        <position position="104"/>
    </location>
    <ligand>
        <name>ATP</name>
        <dbReference type="ChEBI" id="CHEBI:30616"/>
    </ligand>
</feature>
<feature type="binding site" evidence="1">
    <location>
        <position position="105"/>
    </location>
    <ligand>
        <name>ATP</name>
        <dbReference type="ChEBI" id="CHEBI:30616"/>
    </ligand>
</feature>
<feature type="binding site" evidence="1">
    <location>
        <position position="125"/>
    </location>
    <ligand>
        <name>ATP</name>
        <dbReference type="ChEBI" id="CHEBI:30616"/>
    </ligand>
</feature>
<feature type="binding site" evidence="1">
    <location>
        <position position="137"/>
    </location>
    <ligand>
        <name>ATP</name>
        <dbReference type="ChEBI" id="CHEBI:30616"/>
    </ligand>
</feature>
<feature type="binding site" evidence="1">
    <location>
        <position position="138"/>
    </location>
    <ligand>
        <name>ATP</name>
        <dbReference type="ChEBI" id="CHEBI:30616"/>
    </ligand>
</feature>
<feature type="binding site" evidence="1">
    <location>
        <position position="188"/>
    </location>
    <ligand>
        <name>ATP</name>
        <dbReference type="ChEBI" id="CHEBI:30616"/>
    </ligand>
</feature>
<feature type="binding site" evidence="1">
    <location>
        <position position="195"/>
    </location>
    <ligand>
        <name>ATP</name>
        <dbReference type="ChEBI" id="CHEBI:30616"/>
    </ligand>
</feature>
<feature type="binding site" evidence="1">
    <location>
        <position position="265"/>
    </location>
    <ligand>
        <name>Mg(2+)</name>
        <dbReference type="ChEBI" id="CHEBI:18420"/>
    </ligand>
</feature>
<feature type="binding site" evidence="1">
    <location>
        <position position="274"/>
    </location>
    <ligand>
        <name>ATP</name>
        <dbReference type="ChEBI" id="CHEBI:30616"/>
    </ligand>
</feature>
<feature type="binding site" evidence="1">
    <location>
        <position position="274"/>
    </location>
    <ligand>
        <name>Mg(2+)</name>
        <dbReference type="ChEBI" id="CHEBI:18420"/>
    </ligand>
</feature>
<proteinExistence type="inferred from homology"/>
<dbReference type="EC" id="2.7.7.-" evidence="1"/>
<dbReference type="EC" id="2.7.7.108" evidence="1"/>
<dbReference type="EMBL" id="CP000115">
    <property type="protein sequence ID" value="ABA04207.1"/>
    <property type="molecule type" value="Genomic_DNA"/>
</dbReference>
<dbReference type="RefSeq" id="WP_011314248.1">
    <property type="nucleotide sequence ID" value="NC_007406.1"/>
</dbReference>
<dbReference type="SMR" id="Q3SU34"/>
<dbReference type="STRING" id="323098.Nwi_0945"/>
<dbReference type="KEGG" id="nwi:Nwi_0945"/>
<dbReference type="eggNOG" id="COG0397">
    <property type="taxonomic scope" value="Bacteria"/>
</dbReference>
<dbReference type="HOGENOM" id="CLU_010245_4_1_5"/>
<dbReference type="OrthoDB" id="9776281at2"/>
<dbReference type="Proteomes" id="UP000002531">
    <property type="component" value="Chromosome"/>
</dbReference>
<dbReference type="GO" id="GO:0070733">
    <property type="term" value="F:AMPylase activity"/>
    <property type="evidence" value="ECO:0007669"/>
    <property type="project" value="TreeGrafter"/>
</dbReference>
<dbReference type="GO" id="GO:0005524">
    <property type="term" value="F:ATP binding"/>
    <property type="evidence" value="ECO:0007669"/>
    <property type="project" value="UniProtKB-UniRule"/>
</dbReference>
<dbReference type="GO" id="GO:0000287">
    <property type="term" value="F:magnesium ion binding"/>
    <property type="evidence" value="ECO:0007669"/>
    <property type="project" value="UniProtKB-UniRule"/>
</dbReference>
<dbReference type="HAMAP" id="MF_00692">
    <property type="entry name" value="YdiU_SelO"/>
    <property type="match status" value="1"/>
</dbReference>
<dbReference type="InterPro" id="IPR003846">
    <property type="entry name" value="SelO"/>
</dbReference>
<dbReference type="NCBIfam" id="NF000658">
    <property type="entry name" value="PRK00029.1"/>
    <property type="match status" value="1"/>
</dbReference>
<dbReference type="PANTHER" id="PTHR32057">
    <property type="entry name" value="PROTEIN ADENYLYLTRANSFERASE SELO, MITOCHONDRIAL"/>
    <property type="match status" value="1"/>
</dbReference>
<dbReference type="PANTHER" id="PTHR32057:SF14">
    <property type="entry name" value="PROTEIN ADENYLYLTRANSFERASE SELO, MITOCHONDRIAL"/>
    <property type="match status" value="1"/>
</dbReference>
<dbReference type="Pfam" id="PF02696">
    <property type="entry name" value="SelO"/>
    <property type="match status" value="1"/>
</dbReference>
<accession>Q3SU34</accession>